<reference key="1">
    <citation type="journal article" date="2002" name="J. Bacteriol.">
        <title>Whole-genome comparison of Mycobacterium tuberculosis clinical and laboratory strains.</title>
        <authorList>
            <person name="Fleischmann R.D."/>
            <person name="Alland D."/>
            <person name="Eisen J.A."/>
            <person name="Carpenter L."/>
            <person name="White O."/>
            <person name="Peterson J.D."/>
            <person name="DeBoy R.T."/>
            <person name="Dodson R.J."/>
            <person name="Gwinn M.L."/>
            <person name="Haft D.H."/>
            <person name="Hickey E.K."/>
            <person name="Kolonay J.F."/>
            <person name="Nelson W.C."/>
            <person name="Umayam L.A."/>
            <person name="Ermolaeva M.D."/>
            <person name="Salzberg S.L."/>
            <person name="Delcher A."/>
            <person name="Utterback T.R."/>
            <person name="Weidman J.F."/>
            <person name="Khouri H.M."/>
            <person name="Gill J."/>
            <person name="Mikula A."/>
            <person name="Bishai W."/>
            <person name="Jacobs W.R. Jr."/>
            <person name="Venter J.C."/>
            <person name="Fraser C.M."/>
        </authorList>
    </citation>
    <scope>NUCLEOTIDE SEQUENCE [LARGE SCALE GENOMIC DNA]</scope>
    <source>
        <strain>CDC 1551 / Oshkosh</strain>
    </source>
</reference>
<evidence type="ECO:0000256" key="1">
    <source>
        <dbReference type="SAM" id="MobiDB-lite"/>
    </source>
</evidence>
<evidence type="ECO:0000305" key="2"/>
<keyword id="KW-1185">Reference proteome</keyword>
<comment type="similarity">
    <text evidence="2">To M.leprae ML2427.</text>
</comment>
<sequence>MGNVAGETRANVIPLHTNRSRVAARRRAGQRAESRQHPSLLSDPNDRASAEQIAAVVREIDEHRRAAGATTSSTEATPNDLAQLVAAVAGFLRQRLTGDYSVDEFGFDPHFNSAIVRPLLRFFFKSWFRVEVSGVENIPRDGAALVVANHAGVLPFDGLMLSVAVHDEHPAHRDLRLLAADMVFDLPVIGEAARKAGHTMACTTDAHRLLASGELTAVFPEGYKGLGKRFEDRYRLQRFGRGGFVSAALRTKAPIVPCSIIGSEEIYPMLTDVKLLARLFGLPYFPITPLFPLAGPVGLVPLPSKWRIAFGEPICTADYASTDADDPMVTFELTDQVRETIQQTLYRLLAGRRNIFFG</sequence>
<name>Y502_MYCTO</name>
<accession>P9WKT0</accession>
<accession>L0T5K0</accession>
<accession>P64723</accession>
<accession>Q11167</accession>
<dbReference type="EMBL" id="AE000516">
    <property type="protein sequence ID" value="AAK44746.1"/>
    <property type="molecule type" value="Genomic_DNA"/>
</dbReference>
<dbReference type="PIR" id="A70746">
    <property type="entry name" value="A70746"/>
</dbReference>
<dbReference type="RefSeq" id="WP_003898486.1">
    <property type="nucleotide sequence ID" value="NZ_KK341227.1"/>
</dbReference>
<dbReference type="KEGG" id="mtc:MT0523"/>
<dbReference type="PATRIC" id="fig|83331.31.peg.554"/>
<dbReference type="HOGENOM" id="CLU_042900_1_1_11"/>
<dbReference type="Proteomes" id="UP000001020">
    <property type="component" value="Chromosome"/>
</dbReference>
<dbReference type="GO" id="GO:0016020">
    <property type="term" value="C:membrane"/>
    <property type="evidence" value="ECO:0007669"/>
    <property type="project" value="TreeGrafter"/>
</dbReference>
<dbReference type="GO" id="GO:0016746">
    <property type="term" value="F:acyltransferase activity"/>
    <property type="evidence" value="ECO:0007669"/>
    <property type="project" value="InterPro"/>
</dbReference>
<dbReference type="CDD" id="cd07987">
    <property type="entry name" value="LPLAT_MGAT-like"/>
    <property type="match status" value="1"/>
</dbReference>
<dbReference type="InterPro" id="IPR016676">
    <property type="entry name" value="P_lipid/glycerol_AcTrfase_prd"/>
</dbReference>
<dbReference type="InterPro" id="IPR002123">
    <property type="entry name" value="Plipid/glycerol_acylTrfase"/>
</dbReference>
<dbReference type="PANTHER" id="PTHR22753:SF14">
    <property type="entry name" value="MONOACYLGLYCEROL_DIACYLGLYCEROL O-ACYLTRANSFERASE"/>
    <property type="match status" value="1"/>
</dbReference>
<dbReference type="PANTHER" id="PTHR22753">
    <property type="entry name" value="TRANSMEMBRANE PROTEIN 68"/>
    <property type="match status" value="1"/>
</dbReference>
<dbReference type="Pfam" id="PF01553">
    <property type="entry name" value="Acyltransferase"/>
    <property type="match status" value="1"/>
</dbReference>
<dbReference type="PIRSF" id="PIRSF016753">
    <property type="entry name" value="P_lipid/glycerol_ac_tran_prd"/>
    <property type="match status" value="1"/>
</dbReference>
<dbReference type="SMART" id="SM00563">
    <property type="entry name" value="PlsC"/>
    <property type="match status" value="1"/>
</dbReference>
<dbReference type="SUPFAM" id="SSF69593">
    <property type="entry name" value="Glycerol-3-phosphate (1)-acyltransferase"/>
    <property type="match status" value="1"/>
</dbReference>
<feature type="chain" id="PRO_0000427600" description="Uncharacterized protein MT0523">
    <location>
        <begin position="1"/>
        <end position="358"/>
    </location>
</feature>
<feature type="region of interest" description="Disordered" evidence="1">
    <location>
        <begin position="1"/>
        <end position="47"/>
    </location>
</feature>
<feature type="compositionally biased region" description="Basic residues" evidence="1">
    <location>
        <begin position="18"/>
        <end position="29"/>
    </location>
</feature>
<gene>
    <name type="ordered locus">MT0523</name>
</gene>
<protein>
    <recommendedName>
        <fullName>Uncharacterized protein MT0523</fullName>
    </recommendedName>
</protein>
<organism>
    <name type="scientific">Mycobacterium tuberculosis (strain CDC 1551 / Oshkosh)</name>
    <dbReference type="NCBI Taxonomy" id="83331"/>
    <lineage>
        <taxon>Bacteria</taxon>
        <taxon>Bacillati</taxon>
        <taxon>Actinomycetota</taxon>
        <taxon>Actinomycetes</taxon>
        <taxon>Mycobacteriales</taxon>
        <taxon>Mycobacteriaceae</taxon>
        <taxon>Mycobacterium</taxon>
        <taxon>Mycobacterium tuberculosis complex</taxon>
    </lineage>
</organism>
<proteinExistence type="predicted"/>